<comment type="function">
    <text evidence="1">Catalyzes the transfer of a dimethylallyl group onto the adenine at position 37 in tRNAs that read codons beginning with uridine, leading to the formation of N6-(dimethylallyl)adenosine (i(6)A).</text>
</comment>
<comment type="catalytic activity">
    <reaction evidence="1">
        <text>adenosine(37) in tRNA + dimethylallyl diphosphate = N(6)-dimethylallyladenosine(37) in tRNA + diphosphate</text>
        <dbReference type="Rhea" id="RHEA:26482"/>
        <dbReference type="Rhea" id="RHEA-COMP:10162"/>
        <dbReference type="Rhea" id="RHEA-COMP:10375"/>
        <dbReference type="ChEBI" id="CHEBI:33019"/>
        <dbReference type="ChEBI" id="CHEBI:57623"/>
        <dbReference type="ChEBI" id="CHEBI:74411"/>
        <dbReference type="ChEBI" id="CHEBI:74415"/>
        <dbReference type="EC" id="2.5.1.75"/>
    </reaction>
</comment>
<comment type="cofactor">
    <cofactor evidence="1">
        <name>Mg(2+)</name>
        <dbReference type="ChEBI" id="CHEBI:18420"/>
    </cofactor>
</comment>
<comment type="subunit">
    <text evidence="1">Monomer.</text>
</comment>
<comment type="similarity">
    <text evidence="1">Belongs to the IPP transferase family.</text>
</comment>
<feature type="chain" id="PRO_0000377117" description="tRNA dimethylallyltransferase">
    <location>
        <begin position="1"/>
        <end position="322"/>
    </location>
</feature>
<feature type="region of interest" description="Interaction with substrate tRNA" evidence="1">
    <location>
        <begin position="43"/>
        <end position="46"/>
    </location>
</feature>
<feature type="region of interest" description="Interaction with substrate tRNA" evidence="1">
    <location>
        <begin position="167"/>
        <end position="171"/>
    </location>
</feature>
<feature type="binding site" evidence="1">
    <location>
        <begin position="18"/>
        <end position="25"/>
    </location>
    <ligand>
        <name>ATP</name>
        <dbReference type="ChEBI" id="CHEBI:30616"/>
    </ligand>
</feature>
<feature type="binding site" evidence="1">
    <location>
        <begin position="20"/>
        <end position="25"/>
    </location>
    <ligand>
        <name>substrate</name>
    </ligand>
</feature>
<feature type="site" description="Interaction with substrate tRNA" evidence="1">
    <location>
        <position position="109"/>
    </location>
</feature>
<feature type="site" description="Interaction with substrate tRNA" evidence="1">
    <location>
        <position position="131"/>
    </location>
</feature>
<dbReference type="EC" id="2.5.1.75" evidence="1"/>
<dbReference type="EMBL" id="CP001101">
    <property type="protein sequence ID" value="ACE04056.1"/>
    <property type="molecule type" value="Genomic_DNA"/>
</dbReference>
<dbReference type="SMR" id="B3EQM3"/>
<dbReference type="STRING" id="331678.Cphamn1_1118"/>
<dbReference type="KEGG" id="cpb:Cphamn1_1118"/>
<dbReference type="eggNOG" id="COG0324">
    <property type="taxonomic scope" value="Bacteria"/>
</dbReference>
<dbReference type="HOGENOM" id="CLU_032616_0_1_10"/>
<dbReference type="OrthoDB" id="9776390at2"/>
<dbReference type="GO" id="GO:0005524">
    <property type="term" value="F:ATP binding"/>
    <property type="evidence" value="ECO:0007669"/>
    <property type="project" value="UniProtKB-UniRule"/>
</dbReference>
<dbReference type="GO" id="GO:0052381">
    <property type="term" value="F:tRNA dimethylallyltransferase activity"/>
    <property type="evidence" value="ECO:0007669"/>
    <property type="project" value="UniProtKB-UniRule"/>
</dbReference>
<dbReference type="GO" id="GO:0006400">
    <property type="term" value="P:tRNA modification"/>
    <property type="evidence" value="ECO:0007669"/>
    <property type="project" value="TreeGrafter"/>
</dbReference>
<dbReference type="Gene3D" id="1.10.20.140">
    <property type="match status" value="1"/>
</dbReference>
<dbReference type="Gene3D" id="3.40.50.300">
    <property type="entry name" value="P-loop containing nucleotide triphosphate hydrolases"/>
    <property type="match status" value="1"/>
</dbReference>
<dbReference type="HAMAP" id="MF_00185">
    <property type="entry name" value="IPP_trans"/>
    <property type="match status" value="1"/>
</dbReference>
<dbReference type="InterPro" id="IPR039657">
    <property type="entry name" value="Dimethylallyltransferase"/>
</dbReference>
<dbReference type="InterPro" id="IPR018022">
    <property type="entry name" value="IPT"/>
</dbReference>
<dbReference type="InterPro" id="IPR027417">
    <property type="entry name" value="P-loop_NTPase"/>
</dbReference>
<dbReference type="NCBIfam" id="TIGR00174">
    <property type="entry name" value="miaA"/>
    <property type="match status" value="1"/>
</dbReference>
<dbReference type="PANTHER" id="PTHR11088">
    <property type="entry name" value="TRNA DIMETHYLALLYLTRANSFERASE"/>
    <property type="match status" value="1"/>
</dbReference>
<dbReference type="PANTHER" id="PTHR11088:SF60">
    <property type="entry name" value="TRNA DIMETHYLALLYLTRANSFERASE"/>
    <property type="match status" value="1"/>
</dbReference>
<dbReference type="Pfam" id="PF01715">
    <property type="entry name" value="IPPT"/>
    <property type="match status" value="1"/>
</dbReference>
<dbReference type="SUPFAM" id="SSF52540">
    <property type="entry name" value="P-loop containing nucleoside triphosphate hydrolases"/>
    <property type="match status" value="1"/>
</dbReference>
<evidence type="ECO:0000255" key="1">
    <source>
        <dbReference type="HAMAP-Rule" id="MF_00185"/>
    </source>
</evidence>
<proteinExistence type="inferred from homology"/>
<sequence length="322" mass="36231">MSSAEQHTCSRPVVLITGPTASGKSALAHALAKAINAEIVSADSRQIYRGMDIGTAKPSMEMLAEVPYHFINEKEIAEEYNAGDFTSDAMARIRSIHEKGHDAIVAGGSTLYIEGLLHGFSQLPKKDADIRRRLQEELNTGGAEKLYARLTTLDPEHARTLDPSKTQRLVRSLEIITITGKTVTGLRAAEHSRLSSVTFIPFGLSLQRNRLYERINTRTDAMMASGLLKEAEQLYERYLSAENRATINALETVGYKELFQYFDGIHSLLRAVELIQQHTRNYAKRQLTFFKNRLNVQWLAAPENLKELHEQKEQLITLYSKT</sequence>
<name>MIAA_CHLPB</name>
<organism>
    <name type="scientific">Chlorobium phaeobacteroides (strain BS1)</name>
    <dbReference type="NCBI Taxonomy" id="331678"/>
    <lineage>
        <taxon>Bacteria</taxon>
        <taxon>Pseudomonadati</taxon>
        <taxon>Chlorobiota</taxon>
        <taxon>Chlorobiia</taxon>
        <taxon>Chlorobiales</taxon>
        <taxon>Chlorobiaceae</taxon>
        <taxon>Chlorobium/Pelodictyon group</taxon>
        <taxon>Chlorobium</taxon>
    </lineage>
</organism>
<protein>
    <recommendedName>
        <fullName evidence="1">tRNA dimethylallyltransferase</fullName>
        <ecNumber evidence="1">2.5.1.75</ecNumber>
    </recommendedName>
    <alternativeName>
        <fullName evidence="1">Dimethylallyl diphosphate:tRNA dimethylallyltransferase</fullName>
        <shortName evidence="1">DMAPP:tRNA dimethylallyltransferase</shortName>
        <shortName evidence="1">DMATase</shortName>
    </alternativeName>
    <alternativeName>
        <fullName evidence="1">Isopentenyl-diphosphate:tRNA isopentenyltransferase</fullName>
        <shortName evidence="1">IPP transferase</shortName>
        <shortName evidence="1">IPPT</shortName>
        <shortName evidence="1">IPTase</shortName>
    </alternativeName>
</protein>
<reference key="1">
    <citation type="submission" date="2008-06" db="EMBL/GenBank/DDBJ databases">
        <title>Complete sequence of Chlorobium phaeobacteroides BS1.</title>
        <authorList>
            <consortium name="US DOE Joint Genome Institute"/>
            <person name="Lucas S."/>
            <person name="Copeland A."/>
            <person name="Lapidus A."/>
            <person name="Glavina del Rio T."/>
            <person name="Dalin E."/>
            <person name="Tice H."/>
            <person name="Bruce D."/>
            <person name="Goodwin L."/>
            <person name="Pitluck S."/>
            <person name="Schmutz J."/>
            <person name="Larimer F."/>
            <person name="Land M."/>
            <person name="Hauser L."/>
            <person name="Kyrpides N."/>
            <person name="Ovchinnikova G."/>
            <person name="Li T."/>
            <person name="Liu Z."/>
            <person name="Zhao F."/>
            <person name="Overmann J."/>
            <person name="Bryant D.A."/>
            <person name="Richardson P."/>
        </authorList>
    </citation>
    <scope>NUCLEOTIDE SEQUENCE [LARGE SCALE GENOMIC DNA]</scope>
    <source>
        <strain>BS1</strain>
    </source>
</reference>
<accession>B3EQM3</accession>
<gene>
    <name evidence="1" type="primary">miaA</name>
    <name type="ordered locus">Cphamn1_1118</name>
</gene>
<keyword id="KW-0067">ATP-binding</keyword>
<keyword id="KW-0460">Magnesium</keyword>
<keyword id="KW-0547">Nucleotide-binding</keyword>
<keyword id="KW-0808">Transferase</keyword>
<keyword id="KW-0819">tRNA processing</keyword>